<proteinExistence type="inferred from homology"/>
<keyword id="KW-1185">Reference proteome</keyword>
<keyword id="KW-0687">Ribonucleoprotein</keyword>
<keyword id="KW-0689">Ribosomal protein</keyword>
<keyword id="KW-0694">RNA-binding</keyword>
<keyword id="KW-0699">rRNA-binding</keyword>
<reference key="1">
    <citation type="journal article" date="2003" name="Genome Res.">
        <title>Tropheryma whipplei twist: a human pathogenic Actinobacteria with a reduced genome.</title>
        <authorList>
            <person name="Raoult D."/>
            <person name="Ogata H."/>
            <person name="Audic S."/>
            <person name="Robert C."/>
            <person name="Suhre K."/>
            <person name="Drancourt M."/>
            <person name="Claverie J.-M."/>
        </authorList>
    </citation>
    <scope>NUCLEOTIDE SEQUENCE [LARGE SCALE GENOMIC DNA]</scope>
    <source>
        <strain>Twist</strain>
    </source>
</reference>
<feature type="chain" id="PRO_0000177255" description="Large ribosomal subunit protein bL20">
    <location>
        <begin position="1"/>
        <end position="136"/>
    </location>
</feature>
<name>RL20_TROWT</name>
<sequence>MVRVARSVNARKKRRSILAAAKGYRGQRSRLYRKAKEQVLRSLVYAYRDRRKRKSNFRKLWIIRINAAARMEGVTYNRFLQGLKLANIELDRRSLAHLAVHNPDTFSALVGVAKDSLKNAPDPVAAARLRGTSSRT</sequence>
<accession>Q83GT0</accession>
<gene>
    <name evidence="1" type="primary">rplT</name>
    <name type="ordered locus">TWT_166</name>
</gene>
<evidence type="ECO:0000255" key="1">
    <source>
        <dbReference type="HAMAP-Rule" id="MF_00382"/>
    </source>
</evidence>
<evidence type="ECO:0000305" key="2"/>
<protein>
    <recommendedName>
        <fullName evidence="1">Large ribosomal subunit protein bL20</fullName>
    </recommendedName>
    <alternativeName>
        <fullName evidence="2">50S ribosomal protein L20</fullName>
    </alternativeName>
</protein>
<organism>
    <name type="scientific">Tropheryma whipplei (strain Twist)</name>
    <name type="common">Whipple's bacillus</name>
    <dbReference type="NCBI Taxonomy" id="203267"/>
    <lineage>
        <taxon>Bacteria</taxon>
        <taxon>Bacillati</taxon>
        <taxon>Actinomycetota</taxon>
        <taxon>Actinomycetes</taxon>
        <taxon>Micrococcales</taxon>
        <taxon>Tropherymataceae</taxon>
        <taxon>Tropheryma</taxon>
    </lineage>
</organism>
<dbReference type="EMBL" id="AE014184">
    <property type="protein sequence ID" value="AAO44263.1"/>
    <property type="molecule type" value="Genomic_DNA"/>
</dbReference>
<dbReference type="RefSeq" id="WP_011102397.1">
    <property type="nucleotide sequence ID" value="NC_004572.3"/>
</dbReference>
<dbReference type="SMR" id="Q83GT0"/>
<dbReference type="STRING" id="203267.TWT_166"/>
<dbReference type="KEGG" id="twh:TWT_166"/>
<dbReference type="eggNOG" id="COG0292">
    <property type="taxonomic scope" value="Bacteria"/>
</dbReference>
<dbReference type="HOGENOM" id="CLU_123265_0_0_11"/>
<dbReference type="OrthoDB" id="9808966at2"/>
<dbReference type="Proteomes" id="UP000002200">
    <property type="component" value="Chromosome"/>
</dbReference>
<dbReference type="GO" id="GO:1990904">
    <property type="term" value="C:ribonucleoprotein complex"/>
    <property type="evidence" value="ECO:0007669"/>
    <property type="project" value="UniProtKB-KW"/>
</dbReference>
<dbReference type="GO" id="GO:0005840">
    <property type="term" value="C:ribosome"/>
    <property type="evidence" value="ECO:0007669"/>
    <property type="project" value="UniProtKB-KW"/>
</dbReference>
<dbReference type="GO" id="GO:0019843">
    <property type="term" value="F:rRNA binding"/>
    <property type="evidence" value="ECO:0007669"/>
    <property type="project" value="UniProtKB-UniRule"/>
</dbReference>
<dbReference type="GO" id="GO:0003735">
    <property type="term" value="F:structural constituent of ribosome"/>
    <property type="evidence" value="ECO:0007669"/>
    <property type="project" value="InterPro"/>
</dbReference>
<dbReference type="GO" id="GO:0000027">
    <property type="term" value="P:ribosomal large subunit assembly"/>
    <property type="evidence" value="ECO:0007669"/>
    <property type="project" value="UniProtKB-UniRule"/>
</dbReference>
<dbReference type="GO" id="GO:0006412">
    <property type="term" value="P:translation"/>
    <property type="evidence" value="ECO:0007669"/>
    <property type="project" value="InterPro"/>
</dbReference>
<dbReference type="CDD" id="cd07026">
    <property type="entry name" value="Ribosomal_L20"/>
    <property type="match status" value="1"/>
</dbReference>
<dbReference type="FunFam" id="1.10.1900.20:FF:000001">
    <property type="entry name" value="50S ribosomal protein L20"/>
    <property type="match status" value="1"/>
</dbReference>
<dbReference type="Gene3D" id="6.10.160.10">
    <property type="match status" value="1"/>
</dbReference>
<dbReference type="Gene3D" id="1.10.1900.20">
    <property type="entry name" value="Ribosomal protein L20"/>
    <property type="match status" value="1"/>
</dbReference>
<dbReference type="HAMAP" id="MF_00382">
    <property type="entry name" value="Ribosomal_bL20"/>
    <property type="match status" value="1"/>
</dbReference>
<dbReference type="InterPro" id="IPR005813">
    <property type="entry name" value="Ribosomal_bL20"/>
</dbReference>
<dbReference type="InterPro" id="IPR049946">
    <property type="entry name" value="RIBOSOMAL_L20_CS"/>
</dbReference>
<dbReference type="InterPro" id="IPR035566">
    <property type="entry name" value="Ribosomal_protein_bL20_C"/>
</dbReference>
<dbReference type="NCBIfam" id="TIGR01032">
    <property type="entry name" value="rplT_bact"/>
    <property type="match status" value="1"/>
</dbReference>
<dbReference type="PANTHER" id="PTHR10986">
    <property type="entry name" value="39S RIBOSOMAL PROTEIN L20"/>
    <property type="match status" value="1"/>
</dbReference>
<dbReference type="Pfam" id="PF00453">
    <property type="entry name" value="Ribosomal_L20"/>
    <property type="match status" value="1"/>
</dbReference>
<dbReference type="PRINTS" id="PR00062">
    <property type="entry name" value="RIBOSOMALL20"/>
</dbReference>
<dbReference type="SUPFAM" id="SSF74731">
    <property type="entry name" value="Ribosomal protein L20"/>
    <property type="match status" value="1"/>
</dbReference>
<dbReference type="PROSITE" id="PS00937">
    <property type="entry name" value="RIBOSOMAL_L20"/>
    <property type="match status" value="1"/>
</dbReference>
<comment type="function">
    <text evidence="1">Binds directly to 23S ribosomal RNA and is necessary for the in vitro assembly process of the 50S ribosomal subunit. It is not involved in the protein synthesizing functions of that subunit.</text>
</comment>
<comment type="similarity">
    <text evidence="1">Belongs to the bacterial ribosomal protein bL20 family.</text>
</comment>